<comment type="subcellular location">
    <subcellularLocation>
        <location>Plastid</location>
        <location>Chloroplast</location>
    </subcellularLocation>
</comment>
<comment type="similarity">
    <text evidence="2">Belongs to the bacterial ribosomal protein bL32 family.</text>
</comment>
<name>RK32_PORPU</name>
<accession>P51207</accession>
<gene>
    <name type="primary">rpl32</name>
</gene>
<proteinExistence type="inferred from homology"/>
<protein>
    <recommendedName>
        <fullName evidence="2">Large ribosomal subunit protein bL32c</fullName>
    </recommendedName>
    <alternativeName>
        <fullName>50S ribosomal protein L32, chloroplastic</fullName>
    </alternativeName>
</protein>
<geneLocation type="chloroplast"/>
<keyword id="KW-0150">Chloroplast</keyword>
<keyword id="KW-0934">Plastid</keyword>
<keyword id="KW-0687">Ribonucleoprotein</keyword>
<keyword id="KW-0689">Ribosomal protein</keyword>
<sequence>MAVPKKRTSKAKKNARKANWKNQAKTEAQKALSLAKSVLTGKSNGFVYNTLEVADAIVE</sequence>
<evidence type="ECO:0000256" key="1">
    <source>
        <dbReference type="SAM" id="MobiDB-lite"/>
    </source>
</evidence>
<evidence type="ECO:0000305" key="2"/>
<organism>
    <name type="scientific">Porphyra purpurea</name>
    <name type="common">Red seaweed</name>
    <name type="synonym">Ulva purpurea</name>
    <dbReference type="NCBI Taxonomy" id="2787"/>
    <lineage>
        <taxon>Eukaryota</taxon>
        <taxon>Rhodophyta</taxon>
        <taxon>Bangiophyceae</taxon>
        <taxon>Bangiales</taxon>
        <taxon>Bangiaceae</taxon>
        <taxon>Porphyra</taxon>
    </lineage>
</organism>
<dbReference type="EMBL" id="U38804">
    <property type="protein sequence ID" value="AAC08093.1"/>
    <property type="molecule type" value="Genomic_DNA"/>
</dbReference>
<dbReference type="PIR" id="S73128">
    <property type="entry name" value="S73128"/>
</dbReference>
<dbReference type="RefSeq" id="NP_053817.1">
    <property type="nucleotide sequence ID" value="NC_000925.1"/>
</dbReference>
<dbReference type="SMR" id="P51207"/>
<dbReference type="GeneID" id="809831"/>
<dbReference type="GO" id="GO:0009507">
    <property type="term" value="C:chloroplast"/>
    <property type="evidence" value="ECO:0007669"/>
    <property type="project" value="UniProtKB-SubCell"/>
</dbReference>
<dbReference type="GO" id="GO:0015934">
    <property type="term" value="C:large ribosomal subunit"/>
    <property type="evidence" value="ECO:0007669"/>
    <property type="project" value="InterPro"/>
</dbReference>
<dbReference type="GO" id="GO:0003735">
    <property type="term" value="F:structural constituent of ribosome"/>
    <property type="evidence" value="ECO:0007669"/>
    <property type="project" value="InterPro"/>
</dbReference>
<dbReference type="GO" id="GO:0006412">
    <property type="term" value="P:translation"/>
    <property type="evidence" value="ECO:0007669"/>
    <property type="project" value="UniProtKB-UniRule"/>
</dbReference>
<dbReference type="HAMAP" id="MF_00340">
    <property type="entry name" value="Ribosomal_bL32"/>
    <property type="match status" value="1"/>
</dbReference>
<dbReference type="InterPro" id="IPR002677">
    <property type="entry name" value="Ribosomal_bL32"/>
</dbReference>
<dbReference type="InterPro" id="IPR044958">
    <property type="entry name" value="Ribosomal_bL32_plant/cyanobact"/>
</dbReference>
<dbReference type="InterPro" id="IPR011332">
    <property type="entry name" value="Ribosomal_zn-bd"/>
</dbReference>
<dbReference type="PANTHER" id="PTHR36083">
    <property type="entry name" value="50S RIBOSOMAL PROTEIN L32, CHLOROPLASTIC"/>
    <property type="match status" value="1"/>
</dbReference>
<dbReference type="PANTHER" id="PTHR36083:SF1">
    <property type="entry name" value="LARGE RIBOSOMAL SUBUNIT PROTEIN BL32C"/>
    <property type="match status" value="1"/>
</dbReference>
<dbReference type="Pfam" id="PF01783">
    <property type="entry name" value="Ribosomal_L32p"/>
    <property type="match status" value="1"/>
</dbReference>
<dbReference type="SUPFAM" id="SSF57829">
    <property type="entry name" value="Zn-binding ribosomal proteins"/>
    <property type="match status" value="1"/>
</dbReference>
<reference key="1">
    <citation type="journal article" date="1995" name="Plant Mol. Biol. Rep.">
        <title>Complete nucleotide sequence of the Porphyra purpurea chloroplast genome.</title>
        <authorList>
            <person name="Reith M.E."/>
            <person name="Munholland J."/>
        </authorList>
    </citation>
    <scope>NUCLEOTIDE SEQUENCE [LARGE SCALE GENOMIC DNA]</scope>
    <source>
        <strain>Avonport</strain>
    </source>
</reference>
<feature type="chain" id="PRO_0000172475" description="Large ribosomal subunit protein bL32c">
    <location>
        <begin position="1"/>
        <end position="59"/>
    </location>
</feature>
<feature type="region of interest" description="Disordered" evidence="1">
    <location>
        <begin position="1"/>
        <end position="24"/>
    </location>
</feature>
<feature type="compositionally biased region" description="Basic residues" evidence="1">
    <location>
        <begin position="1"/>
        <end position="19"/>
    </location>
</feature>